<comment type="function">
    <text evidence="1">Glucanases play a role in cell expansion during growth, in cell-cell fusion during mating, and in spore release during sporulation. This enzyme may be involved in beta-glucan degradation. Active on laminarin and lichenan (By similarity).</text>
</comment>
<comment type="catalytic activity">
    <reaction>
        <text>Hydrolysis of (1-&gt;3)-beta-D-glucosidic linkages in (1-&gt;3)-beta-D-glucans.</text>
        <dbReference type="EC" id="3.2.1.39"/>
    </reaction>
</comment>
<comment type="subcellular location">
    <subcellularLocation>
        <location evidence="1">Cell membrane</location>
        <topology evidence="1">Single-pass type II membrane protein</topology>
    </subcellularLocation>
</comment>
<comment type="similarity">
    <text evidence="5">Belongs to the glycosyl hydrolase 17 family.</text>
</comment>
<proteinExistence type="inferred from homology"/>
<accession>B0Y429</accession>
<reference key="1">
    <citation type="journal article" date="2008" name="PLoS Genet.">
        <title>Genomic islands in the pathogenic filamentous fungus Aspergillus fumigatus.</title>
        <authorList>
            <person name="Fedorova N.D."/>
            <person name="Khaldi N."/>
            <person name="Joardar V.S."/>
            <person name="Maiti R."/>
            <person name="Amedeo P."/>
            <person name="Anderson M.J."/>
            <person name="Crabtree J."/>
            <person name="Silva J.C."/>
            <person name="Badger J.H."/>
            <person name="Albarraq A."/>
            <person name="Angiuoli S."/>
            <person name="Bussey H."/>
            <person name="Bowyer P."/>
            <person name="Cotty P.J."/>
            <person name="Dyer P.S."/>
            <person name="Egan A."/>
            <person name="Galens K."/>
            <person name="Fraser-Liggett C.M."/>
            <person name="Haas B.J."/>
            <person name="Inman J.M."/>
            <person name="Kent R."/>
            <person name="Lemieux S."/>
            <person name="Malavazi I."/>
            <person name="Orvis J."/>
            <person name="Roemer T."/>
            <person name="Ronning C.M."/>
            <person name="Sundaram J.P."/>
            <person name="Sutton G."/>
            <person name="Turner G."/>
            <person name="Venter J.C."/>
            <person name="White O.R."/>
            <person name="Whitty B.R."/>
            <person name="Youngman P."/>
            <person name="Wolfe K.H."/>
            <person name="Goldman G.H."/>
            <person name="Wortman J.R."/>
            <person name="Jiang B."/>
            <person name="Denning D.W."/>
            <person name="Nierman W.C."/>
        </authorList>
    </citation>
    <scope>NUCLEOTIDE SEQUENCE [LARGE SCALE GENOMIC DNA]</scope>
    <source>
        <strain>CBS 144.89 / FGSC A1163 / CEA10</strain>
    </source>
</reference>
<organism>
    <name type="scientific">Aspergillus fumigatus (strain CBS 144.89 / FGSC A1163 / CEA10)</name>
    <name type="common">Neosartorya fumigata</name>
    <dbReference type="NCBI Taxonomy" id="451804"/>
    <lineage>
        <taxon>Eukaryota</taxon>
        <taxon>Fungi</taxon>
        <taxon>Dikarya</taxon>
        <taxon>Ascomycota</taxon>
        <taxon>Pezizomycotina</taxon>
        <taxon>Eurotiomycetes</taxon>
        <taxon>Eurotiomycetidae</taxon>
        <taxon>Eurotiales</taxon>
        <taxon>Aspergillaceae</taxon>
        <taxon>Aspergillus</taxon>
        <taxon>Aspergillus subgen. Fumigati</taxon>
    </lineage>
</organism>
<dbReference type="EC" id="3.2.1.39"/>
<dbReference type="EMBL" id="DS499597">
    <property type="protein sequence ID" value="EDP51620.1"/>
    <property type="molecule type" value="Genomic_DNA"/>
</dbReference>
<dbReference type="SMR" id="B0Y429"/>
<dbReference type="GlyCosmos" id="B0Y429">
    <property type="glycosylation" value="5 sites, No reported glycans"/>
</dbReference>
<dbReference type="EnsemblFungi" id="EDP51620">
    <property type="protein sequence ID" value="EDP51620"/>
    <property type="gene ID" value="AFUB_056310"/>
</dbReference>
<dbReference type="VEuPathDB" id="FungiDB:AFUB_056310"/>
<dbReference type="HOGENOM" id="CLU_011476_0_1_1"/>
<dbReference type="OrthoDB" id="87524at5052"/>
<dbReference type="Proteomes" id="UP000001699">
    <property type="component" value="Unassembled WGS sequence"/>
</dbReference>
<dbReference type="GO" id="GO:0009986">
    <property type="term" value="C:cell surface"/>
    <property type="evidence" value="ECO:0007669"/>
    <property type="project" value="TreeGrafter"/>
</dbReference>
<dbReference type="GO" id="GO:0005576">
    <property type="term" value="C:extracellular region"/>
    <property type="evidence" value="ECO:0007669"/>
    <property type="project" value="TreeGrafter"/>
</dbReference>
<dbReference type="GO" id="GO:0009277">
    <property type="term" value="C:fungal-type cell wall"/>
    <property type="evidence" value="ECO:0007669"/>
    <property type="project" value="TreeGrafter"/>
</dbReference>
<dbReference type="GO" id="GO:0005886">
    <property type="term" value="C:plasma membrane"/>
    <property type="evidence" value="ECO:0007669"/>
    <property type="project" value="UniProtKB-SubCell"/>
</dbReference>
<dbReference type="GO" id="GO:0042973">
    <property type="term" value="F:glucan endo-1,3-beta-D-glucosidase activity"/>
    <property type="evidence" value="ECO:0007669"/>
    <property type="project" value="UniProtKB-EC"/>
</dbReference>
<dbReference type="GO" id="GO:0071555">
    <property type="term" value="P:cell wall organization"/>
    <property type="evidence" value="ECO:0007669"/>
    <property type="project" value="UniProtKB-KW"/>
</dbReference>
<dbReference type="GO" id="GO:0000272">
    <property type="term" value="P:polysaccharide catabolic process"/>
    <property type="evidence" value="ECO:0007669"/>
    <property type="project" value="UniProtKB-KW"/>
</dbReference>
<dbReference type="FunFam" id="3.20.20.80:FF:000151">
    <property type="entry name" value="Glucan endo-1,3-beta-glucosidase btgC"/>
    <property type="match status" value="1"/>
</dbReference>
<dbReference type="Gene3D" id="3.20.20.80">
    <property type="entry name" value="Glycosidases"/>
    <property type="match status" value="1"/>
</dbReference>
<dbReference type="InterPro" id="IPR050732">
    <property type="entry name" value="Beta-glucan_modifiers"/>
</dbReference>
<dbReference type="InterPro" id="IPR017853">
    <property type="entry name" value="Glycoside_hydrolase_SF"/>
</dbReference>
<dbReference type="PANTHER" id="PTHR16631">
    <property type="entry name" value="GLUCAN 1,3-BETA-GLUCOSIDASE"/>
    <property type="match status" value="1"/>
</dbReference>
<dbReference type="PANTHER" id="PTHR16631:SF17">
    <property type="entry name" value="GLUCAN ENDO-1,3-BETA-GLUCOSIDASE BTGC"/>
    <property type="match status" value="1"/>
</dbReference>
<dbReference type="SUPFAM" id="SSF51445">
    <property type="entry name" value="(Trans)glycosidases"/>
    <property type="match status" value="1"/>
</dbReference>
<evidence type="ECO:0000250" key="1"/>
<evidence type="ECO:0000250" key="2">
    <source>
        <dbReference type="UniProtKB" id="O22317"/>
    </source>
</evidence>
<evidence type="ECO:0000255" key="3"/>
<evidence type="ECO:0000256" key="4">
    <source>
        <dbReference type="SAM" id="MobiDB-lite"/>
    </source>
</evidence>
<evidence type="ECO:0000305" key="5"/>
<sequence>MSGPNRTYSFGEGDDGLAHPSSRTHAMHSQYDDVSPISDGARMNPMNGQGMDHGLASVLEDGRQGWGRSPEPSPSLLTGSSATPGMDNLGPGAVGGGISGIALSVANSHDRLSGVEALMGTDGQEANIPAERGLSTTGSDNPYVPEPPEYRYSYGSNIALGAAAAPAGQLTPGQSVSHLSSTNPSQRNLYDIPYQDVGGLNAGPYQRHSAYSSNDLPVDINPDEIVDDGDDGFVPAPNSGSGARKSQAIPAAAGGAAAGGVLGNLGGLFGGKSAADTSYGPVPGAGLEAGEKGRWVKPKPGGGNKKRGWIVGAILAFIIIGAIVGGAVGGTIGHRGNEEPSSASSASSSSTQTATEDTSVNGDLDKNSAEIKALMNNKNLHKVFPGIDYTPWGVQYPLCLKYPPSQNNVTRDMAVLTQLTNNVRLYGTDCNQTEMVLHAIDKLEIKDMKIWLGVWIDSNETTSRRQIDQLYKIIDDAKDISIFNGAIVGNEALYRAGSDKTSAQTTLINYMQEVKDHFKKKNIDLPVATSDLGDNWDATLVQAADVVMANVHPFFGGIPVDQAAAWTWRFWQDHNVALTKGTNKKQIISEVGWPSGGGNDCGQGANCPNDTAGAVAGVDELNKFMEDWVCQALDNGTDYFWFEAFDEPWKIVYNTGKENWEDKWGLMDSARNLKPGLKIPDCGGKTAT</sequence>
<feature type="chain" id="PRO_0000395122" description="Probable glucan endo-1,3-beta-glucosidase btgC">
    <location>
        <begin position="1"/>
        <end position="688"/>
    </location>
</feature>
<feature type="topological domain" description="Cytoplasmic" evidence="3">
    <location>
        <begin position="1"/>
        <end position="307"/>
    </location>
</feature>
<feature type="transmembrane region" description="Helical; Signal-anchor for type II membrane protein" evidence="3">
    <location>
        <begin position="308"/>
        <end position="328"/>
    </location>
</feature>
<feature type="topological domain" description="Extracellular" evidence="3">
    <location>
        <begin position="329"/>
        <end position="688"/>
    </location>
</feature>
<feature type="region of interest" description="Disordered" evidence="4">
    <location>
        <begin position="1"/>
        <end position="49"/>
    </location>
</feature>
<feature type="region of interest" description="Disordered" evidence="4">
    <location>
        <begin position="61"/>
        <end position="91"/>
    </location>
</feature>
<feature type="region of interest" description="Disordered" evidence="4">
    <location>
        <begin position="169"/>
        <end position="194"/>
    </location>
</feature>
<feature type="region of interest" description="Disordered" evidence="4">
    <location>
        <begin position="334"/>
        <end position="363"/>
    </location>
</feature>
<feature type="compositionally biased region" description="Polar residues" evidence="4">
    <location>
        <begin position="175"/>
        <end position="188"/>
    </location>
</feature>
<feature type="compositionally biased region" description="Low complexity" evidence="4">
    <location>
        <begin position="341"/>
        <end position="355"/>
    </location>
</feature>
<feature type="active site" description="Proton donor" evidence="2">
    <location>
        <position position="491"/>
    </location>
</feature>
<feature type="active site" description="Nucleophile" evidence="2">
    <location>
        <position position="590"/>
    </location>
</feature>
<feature type="glycosylation site" description="N-linked (GlcNAc...) asparagine" evidence="3">
    <location>
        <position position="408"/>
    </location>
</feature>
<feature type="glycosylation site" description="N-linked (GlcNAc...) asparagine" evidence="3">
    <location>
        <position position="431"/>
    </location>
</feature>
<feature type="glycosylation site" description="N-linked (GlcNAc...) asparagine" evidence="3">
    <location>
        <position position="459"/>
    </location>
</feature>
<feature type="glycosylation site" description="N-linked (GlcNAc...) asparagine" evidence="3">
    <location>
        <position position="609"/>
    </location>
</feature>
<feature type="glycosylation site" description="N-linked (GlcNAc...) asparagine" evidence="3">
    <location>
        <position position="635"/>
    </location>
</feature>
<keyword id="KW-0119">Carbohydrate metabolism</keyword>
<keyword id="KW-1003">Cell membrane</keyword>
<keyword id="KW-0961">Cell wall biogenesis/degradation</keyword>
<keyword id="KW-0325">Glycoprotein</keyword>
<keyword id="KW-0378">Hydrolase</keyword>
<keyword id="KW-0472">Membrane</keyword>
<keyword id="KW-0624">Polysaccharide degradation</keyword>
<keyword id="KW-0735">Signal-anchor</keyword>
<keyword id="KW-0812">Transmembrane</keyword>
<keyword id="KW-1133">Transmembrane helix</keyword>
<name>BTGC_ASPFC</name>
<protein>
    <recommendedName>
        <fullName>Probable glucan endo-1,3-beta-glucosidase btgC</fullName>
        <ecNumber>3.2.1.39</ecNumber>
    </recommendedName>
    <alternativeName>
        <fullName>Endo-1,3-beta-glucanase btgC</fullName>
    </alternativeName>
    <alternativeName>
        <fullName>Laminarinase btgC</fullName>
    </alternativeName>
</protein>
<gene>
    <name type="primary">btgC</name>
    <name type="ORF">AFUB_056310</name>
</gene>